<evidence type="ECO:0000255" key="1">
    <source>
        <dbReference type="HAMAP-Rule" id="MF_01310"/>
    </source>
</evidence>
<evidence type="ECO:0000305" key="2"/>
<reference key="1">
    <citation type="submission" date="2006-11" db="EMBL/GenBank/DDBJ databases">
        <title>Identification and characterization of a new conjugation/ type IVA secretion system (trb/tra) of L. pneumophila Corby localized on a mobile genomic island.</title>
        <authorList>
            <person name="Gloeckner G."/>
            <person name="Albert-Weissenberger C."/>
            <person name="Weinmann E."/>
            <person name="Jacobi S."/>
            <person name="Schunder E."/>
            <person name="Steinert M."/>
            <person name="Buchrieser C."/>
            <person name="Hacker J."/>
            <person name="Heuner K."/>
        </authorList>
    </citation>
    <scope>NUCLEOTIDE SEQUENCE [LARGE SCALE GENOMIC DNA]</scope>
    <source>
        <strain>Corby</strain>
    </source>
</reference>
<gene>
    <name evidence="1" type="primary">rpsK</name>
    <name type="ordered locus">LPC_2992</name>
</gene>
<proteinExistence type="inferred from homology"/>
<organism>
    <name type="scientific">Legionella pneumophila (strain Corby)</name>
    <dbReference type="NCBI Taxonomy" id="400673"/>
    <lineage>
        <taxon>Bacteria</taxon>
        <taxon>Pseudomonadati</taxon>
        <taxon>Pseudomonadota</taxon>
        <taxon>Gammaproteobacteria</taxon>
        <taxon>Legionellales</taxon>
        <taxon>Legionellaceae</taxon>
        <taxon>Legionella</taxon>
    </lineage>
</organism>
<keyword id="KW-0687">Ribonucleoprotein</keyword>
<keyword id="KW-0689">Ribosomal protein</keyword>
<keyword id="KW-0694">RNA-binding</keyword>
<keyword id="KW-0699">rRNA-binding</keyword>
<dbReference type="EMBL" id="CP000675">
    <property type="protein sequence ID" value="ABQ56893.1"/>
    <property type="molecule type" value="Genomic_DNA"/>
</dbReference>
<dbReference type="RefSeq" id="WP_011945552.1">
    <property type="nucleotide sequence ID" value="NC_009494.2"/>
</dbReference>
<dbReference type="SMR" id="A5IHP3"/>
<dbReference type="KEGG" id="lpc:LPC_2992"/>
<dbReference type="HOGENOM" id="CLU_072439_5_0_6"/>
<dbReference type="GO" id="GO:1990904">
    <property type="term" value="C:ribonucleoprotein complex"/>
    <property type="evidence" value="ECO:0007669"/>
    <property type="project" value="UniProtKB-KW"/>
</dbReference>
<dbReference type="GO" id="GO:0005840">
    <property type="term" value="C:ribosome"/>
    <property type="evidence" value="ECO:0007669"/>
    <property type="project" value="UniProtKB-KW"/>
</dbReference>
<dbReference type="GO" id="GO:0019843">
    <property type="term" value="F:rRNA binding"/>
    <property type="evidence" value="ECO:0007669"/>
    <property type="project" value="UniProtKB-UniRule"/>
</dbReference>
<dbReference type="GO" id="GO:0003735">
    <property type="term" value="F:structural constituent of ribosome"/>
    <property type="evidence" value="ECO:0007669"/>
    <property type="project" value="InterPro"/>
</dbReference>
<dbReference type="GO" id="GO:0006412">
    <property type="term" value="P:translation"/>
    <property type="evidence" value="ECO:0007669"/>
    <property type="project" value="UniProtKB-UniRule"/>
</dbReference>
<dbReference type="FunFam" id="3.30.420.80:FF:000001">
    <property type="entry name" value="30S ribosomal protein S11"/>
    <property type="match status" value="1"/>
</dbReference>
<dbReference type="Gene3D" id="3.30.420.80">
    <property type="entry name" value="Ribosomal protein S11"/>
    <property type="match status" value="1"/>
</dbReference>
<dbReference type="HAMAP" id="MF_01310">
    <property type="entry name" value="Ribosomal_uS11"/>
    <property type="match status" value="1"/>
</dbReference>
<dbReference type="InterPro" id="IPR001971">
    <property type="entry name" value="Ribosomal_uS11"/>
</dbReference>
<dbReference type="InterPro" id="IPR019981">
    <property type="entry name" value="Ribosomal_uS11_bac-type"/>
</dbReference>
<dbReference type="InterPro" id="IPR036967">
    <property type="entry name" value="Ribosomal_uS11_sf"/>
</dbReference>
<dbReference type="NCBIfam" id="NF003698">
    <property type="entry name" value="PRK05309.1"/>
    <property type="match status" value="1"/>
</dbReference>
<dbReference type="NCBIfam" id="TIGR03632">
    <property type="entry name" value="uS11_bact"/>
    <property type="match status" value="1"/>
</dbReference>
<dbReference type="PANTHER" id="PTHR11759">
    <property type="entry name" value="40S RIBOSOMAL PROTEIN S14/30S RIBOSOMAL PROTEIN S11"/>
    <property type="match status" value="1"/>
</dbReference>
<dbReference type="Pfam" id="PF00411">
    <property type="entry name" value="Ribosomal_S11"/>
    <property type="match status" value="1"/>
</dbReference>
<dbReference type="PIRSF" id="PIRSF002131">
    <property type="entry name" value="Ribosomal_S11"/>
    <property type="match status" value="1"/>
</dbReference>
<dbReference type="SUPFAM" id="SSF53137">
    <property type="entry name" value="Translational machinery components"/>
    <property type="match status" value="1"/>
</dbReference>
<sequence length="132" mass="14351">MAITKSKQQKTRKKVKRVVSDGIVHIHASFNNTIVTFTDRQGNALCWATSGGSGFRGSRKSTPYAAQVATERAAAVAKEYGMKSVAVFVHGPGPGRESTIRELITQDFKIVEITDVTGIPHNGCKPPIKRRV</sequence>
<name>RS11_LEGPC</name>
<comment type="function">
    <text evidence="1">Located on the platform of the 30S subunit, it bridges several disparate RNA helices of the 16S rRNA. Forms part of the Shine-Dalgarno cleft in the 70S ribosome.</text>
</comment>
<comment type="subunit">
    <text evidence="1">Part of the 30S ribosomal subunit. Interacts with proteins S7 and S18. Binds to IF-3.</text>
</comment>
<comment type="similarity">
    <text evidence="1">Belongs to the universal ribosomal protein uS11 family.</text>
</comment>
<feature type="chain" id="PRO_1000051839" description="Small ribosomal subunit protein uS11">
    <location>
        <begin position="1"/>
        <end position="132"/>
    </location>
</feature>
<protein>
    <recommendedName>
        <fullName evidence="1">Small ribosomal subunit protein uS11</fullName>
    </recommendedName>
    <alternativeName>
        <fullName evidence="2">30S ribosomal protein S11</fullName>
    </alternativeName>
</protein>
<accession>A5IHP3</accession>